<gene>
    <name evidence="1" type="primary">ileS</name>
    <name type="ordered locus">PD_1437</name>
</gene>
<feature type="chain" id="PRO_0000098510" description="Isoleucine--tRNA ligase">
    <location>
        <begin position="1"/>
        <end position="943"/>
    </location>
</feature>
<feature type="short sequence motif" description="'HIGH' region">
    <location>
        <begin position="59"/>
        <end position="69"/>
    </location>
</feature>
<feature type="short sequence motif" description="'KMSKS' region">
    <location>
        <begin position="618"/>
        <end position="622"/>
    </location>
</feature>
<feature type="binding site" evidence="1">
    <location>
        <position position="577"/>
    </location>
    <ligand>
        <name>L-isoleucyl-5'-AMP</name>
        <dbReference type="ChEBI" id="CHEBI:178002"/>
    </ligand>
</feature>
<feature type="binding site" evidence="1">
    <location>
        <position position="621"/>
    </location>
    <ligand>
        <name>ATP</name>
        <dbReference type="ChEBI" id="CHEBI:30616"/>
    </ligand>
</feature>
<feature type="binding site" evidence="1">
    <location>
        <position position="906"/>
    </location>
    <ligand>
        <name>Zn(2+)</name>
        <dbReference type="ChEBI" id="CHEBI:29105"/>
    </ligand>
</feature>
<feature type="binding site" evidence="1">
    <location>
        <position position="909"/>
    </location>
    <ligand>
        <name>Zn(2+)</name>
        <dbReference type="ChEBI" id="CHEBI:29105"/>
    </ligand>
</feature>
<feature type="binding site" evidence="1">
    <location>
        <position position="926"/>
    </location>
    <ligand>
        <name>Zn(2+)</name>
        <dbReference type="ChEBI" id="CHEBI:29105"/>
    </ligand>
</feature>
<feature type="binding site" evidence="1">
    <location>
        <position position="929"/>
    </location>
    <ligand>
        <name>Zn(2+)</name>
        <dbReference type="ChEBI" id="CHEBI:29105"/>
    </ligand>
</feature>
<keyword id="KW-0030">Aminoacyl-tRNA synthetase</keyword>
<keyword id="KW-0067">ATP-binding</keyword>
<keyword id="KW-0963">Cytoplasm</keyword>
<keyword id="KW-0436">Ligase</keyword>
<keyword id="KW-0479">Metal-binding</keyword>
<keyword id="KW-0547">Nucleotide-binding</keyword>
<keyword id="KW-0648">Protein biosynthesis</keyword>
<keyword id="KW-1185">Reference proteome</keyword>
<keyword id="KW-0862">Zinc</keyword>
<reference key="1">
    <citation type="journal article" date="2003" name="J. Bacteriol.">
        <title>Comparative analyses of the complete genome sequences of Pierce's disease and citrus variegated chlorosis strains of Xylella fastidiosa.</title>
        <authorList>
            <person name="Van Sluys M.A."/>
            <person name="de Oliveira M.C."/>
            <person name="Monteiro-Vitorello C.B."/>
            <person name="Miyaki C.Y."/>
            <person name="Furlan L.R."/>
            <person name="Camargo L.E.A."/>
            <person name="da Silva A.C.R."/>
            <person name="Moon D.H."/>
            <person name="Takita M.A."/>
            <person name="Lemos E.G.M."/>
            <person name="Machado M.A."/>
            <person name="Ferro M.I.T."/>
            <person name="da Silva F.R."/>
            <person name="Goldman M.H.S."/>
            <person name="Goldman G.H."/>
            <person name="Lemos M.V.F."/>
            <person name="El-Dorry H."/>
            <person name="Tsai S.M."/>
            <person name="Carrer H."/>
            <person name="Carraro D.M."/>
            <person name="de Oliveira R.C."/>
            <person name="Nunes L.R."/>
            <person name="Siqueira W.J."/>
            <person name="Coutinho L.L."/>
            <person name="Kimura E.T."/>
            <person name="Ferro E.S."/>
            <person name="Harakava R."/>
            <person name="Kuramae E.E."/>
            <person name="Marino C.L."/>
            <person name="Giglioti E."/>
            <person name="Abreu I.L."/>
            <person name="Alves L.M.C."/>
            <person name="do Amaral A.M."/>
            <person name="Baia G.S."/>
            <person name="Blanco S.R."/>
            <person name="Brito M.S."/>
            <person name="Cannavan F.S."/>
            <person name="Celestino A.V."/>
            <person name="da Cunha A.F."/>
            <person name="Fenille R.C."/>
            <person name="Ferro J.A."/>
            <person name="Formighieri E.F."/>
            <person name="Kishi L.T."/>
            <person name="Leoni S.G."/>
            <person name="Oliveira A.R."/>
            <person name="Rosa V.E. Jr."/>
            <person name="Sassaki F.T."/>
            <person name="Sena J.A.D."/>
            <person name="de Souza A.A."/>
            <person name="Truffi D."/>
            <person name="Tsukumo F."/>
            <person name="Yanai G.M."/>
            <person name="Zaros L.G."/>
            <person name="Civerolo E.L."/>
            <person name="Simpson A.J.G."/>
            <person name="Almeida N.F. Jr."/>
            <person name="Setubal J.C."/>
            <person name="Kitajima J.P."/>
        </authorList>
    </citation>
    <scope>NUCLEOTIDE SEQUENCE [LARGE SCALE GENOMIC DNA]</scope>
    <source>
        <strain>Temecula1 / ATCC 700964</strain>
    </source>
</reference>
<dbReference type="EC" id="6.1.1.5" evidence="1"/>
<dbReference type="EMBL" id="AE009442">
    <property type="protein sequence ID" value="AAO29281.1"/>
    <property type="molecule type" value="Genomic_DNA"/>
</dbReference>
<dbReference type="RefSeq" id="WP_011098114.1">
    <property type="nucleotide sequence ID" value="NC_004556.1"/>
</dbReference>
<dbReference type="SMR" id="Q87BL5"/>
<dbReference type="GeneID" id="93905258"/>
<dbReference type="KEGG" id="xft:PD_1437"/>
<dbReference type="HOGENOM" id="CLU_001493_7_1_6"/>
<dbReference type="Proteomes" id="UP000002516">
    <property type="component" value="Chromosome"/>
</dbReference>
<dbReference type="GO" id="GO:0005829">
    <property type="term" value="C:cytosol"/>
    <property type="evidence" value="ECO:0007669"/>
    <property type="project" value="TreeGrafter"/>
</dbReference>
<dbReference type="GO" id="GO:0002161">
    <property type="term" value="F:aminoacyl-tRNA deacylase activity"/>
    <property type="evidence" value="ECO:0007669"/>
    <property type="project" value="InterPro"/>
</dbReference>
<dbReference type="GO" id="GO:0005524">
    <property type="term" value="F:ATP binding"/>
    <property type="evidence" value="ECO:0007669"/>
    <property type="project" value="UniProtKB-UniRule"/>
</dbReference>
<dbReference type="GO" id="GO:0004822">
    <property type="term" value="F:isoleucine-tRNA ligase activity"/>
    <property type="evidence" value="ECO:0007669"/>
    <property type="project" value="UniProtKB-UniRule"/>
</dbReference>
<dbReference type="GO" id="GO:0000049">
    <property type="term" value="F:tRNA binding"/>
    <property type="evidence" value="ECO:0007669"/>
    <property type="project" value="InterPro"/>
</dbReference>
<dbReference type="GO" id="GO:0008270">
    <property type="term" value="F:zinc ion binding"/>
    <property type="evidence" value="ECO:0007669"/>
    <property type="project" value="UniProtKB-UniRule"/>
</dbReference>
<dbReference type="GO" id="GO:0006428">
    <property type="term" value="P:isoleucyl-tRNA aminoacylation"/>
    <property type="evidence" value="ECO:0007669"/>
    <property type="project" value="UniProtKB-UniRule"/>
</dbReference>
<dbReference type="CDD" id="cd07960">
    <property type="entry name" value="Anticodon_Ia_Ile_BEm"/>
    <property type="match status" value="1"/>
</dbReference>
<dbReference type="FunFam" id="1.10.730.20:FF:000001">
    <property type="entry name" value="Isoleucine--tRNA ligase"/>
    <property type="match status" value="1"/>
</dbReference>
<dbReference type="FunFam" id="3.40.50.620:FF:000042">
    <property type="entry name" value="Isoleucine--tRNA ligase"/>
    <property type="match status" value="1"/>
</dbReference>
<dbReference type="FunFam" id="3.40.50.620:FF:000048">
    <property type="entry name" value="Isoleucine--tRNA ligase"/>
    <property type="match status" value="1"/>
</dbReference>
<dbReference type="FunFam" id="3.90.740.10:FF:000022">
    <property type="entry name" value="Isoleucine--tRNA ligase"/>
    <property type="match status" value="1"/>
</dbReference>
<dbReference type="Gene3D" id="1.10.730.20">
    <property type="match status" value="1"/>
</dbReference>
<dbReference type="Gene3D" id="3.40.50.620">
    <property type="entry name" value="HUPs"/>
    <property type="match status" value="2"/>
</dbReference>
<dbReference type="Gene3D" id="3.90.740.10">
    <property type="entry name" value="Valyl/Leucyl/Isoleucyl-tRNA synthetase, editing domain"/>
    <property type="match status" value="1"/>
</dbReference>
<dbReference type="HAMAP" id="MF_02002">
    <property type="entry name" value="Ile_tRNA_synth_type1"/>
    <property type="match status" value="1"/>
</dbReference>
<dbReference type="InterPro" id="IPR001412">
    <property type="entry name" value="aa-tRNA-synth_I_CS"/>
</dbReference>
<dbReference type="InterPro" id="IPR002300">
    <property type="entry name" value="aa-tRNA-synth_Ia"/>
</dbReference>
<dbReference type="InterPro" id="IPR033708">
    <property type="entry name" value="Anticodon_Ile_BEm"/>
</dbReference>
<dbReference type="InterPro" id="IPR002301">
    <property type="entry name" value="Ile-tRNA-ligase"/>
</dbReference>
<dbReference type="InterPro" id="IPR023585">
    <property type="entry name" value="Ile-tRNA-ligase_type1"/>
</dbReference>
<dbReference type="InterPro" id="IPR050081">
    <property type="entry name" value="Ile-tRNA_ligase"/>
</dbReference>
<dbReference type="InterPro" id="IPR013155">
    <property type="entry name" value="M/V/L/I-tRNA-synth_anticd-bd"/>
</dbReference>
<dbReference type="InterPro" id="IPR014729">
    <property type="entry name" value="Rossmann-like_a/b/a_fold"/>
</dbReference>
<dbReference type="InterPro" id="IPR009080">
    <property type="entry name" value="tRNAsynth_Ia_anticodon-bd"/>
</dbReference>
<dbReference type="InterPro" id="IPR009008">
    <property type="entry name" value="Val/Leu/Ile-tRNA-synth_edit"/>
</dbReference>
<dbReference type="InterPro" id="IPR010663">
    <property type="entry name" value="Znf_FPG/IleRS"/>
</dbReference>
<dbReference type="NCBIfam" id="TIGR00392">
    <property type="entry name" value="ileS"/>
    <property type="match status" value="1"/>
</dbReference>
<dbReference type="PANTHER" id="PTHR42765:SF1">
    <property type="entry name" value="ISOLEUCINE--TRNA LIGASE, MITOCHONDRIAL"/>
    <property type="match status" value="1"/>
</dbReference>
<dbReference type="PANTHER" id="PTHR42765">
    <property type="entry name" value="SOLEUCYL-TRNA SYNTHETASE"/>
    <property type="match status" value="1"/>
</dbReference>
<dbReference type="Pfam" id="PF08264">
    <property type="entry name" value="Anticodon_1"/>
    <property type="match status" value="1"/>
</dbReference>
<dbReference type="Pfam" id="PF00133">
    <property type="entry name" value="tRNA-synt_1"/>
    <property type="match status" value="1"/>
</dbReference>
<dbReference type="Pfam" id="PF06827">
    <property type="entry name" value="zf-FPG_IleRS"/>
    <property type="match status" value="1"/>
</dbReference>
<dbReference type="PRINTS" id="PR00984">
    <property type="entry name" value="TRNASYNTHILE"/>
</dbReference>
<dbReference type="SUPFAM" id="SSF47323">
    <property type="entry name" value="Anticodon-binding domain of a subclass of class I aminoacyl-tRNA synthetases"/>
    <property type="match status" value="1"/>
</dbReference>
<dbReference type="SUPFAM" id="SSF52374">
    <property type="entry name" value="Nucleotidylyl transferase"/>
    <property type="match status" value="1"/>
</dbReference>
<dbReference type="SUPFAM" id="SSF50677">
    <property type="entry name" value="ValRS/IleRS/LeuRS editing domain"/>
    <property type="match status" value="1"/>
</dbReference>
<dbReference type="PROSITE" id="PS00178">
    <property type="entry name" value="AA_TRNA_LIGASE_I"/>
    <property type="match status" value="1"/>
</dbReference>
<name>SYI_XYLFT</name>
<comment type="function">
    <text evidence="1">Catalyzes the attachment of isoleucine to tRNA(Ile). As IleRS can inadvertently accommodate and process structurally similar amino acids such as valine, to avoid such errors it has two additional distinct tRNA(Ile)-dependent editing activities. One activity is designated as 'pretransfer' editing and involves the hydrolysis of activated Val-AMP. The other activity is designated 'posttransfer' editing and involves deacylation of mischarged Val-tRNA(Ile).</text>
</comment>
<comment type="catalytic activity">
    <reaction evidence="1">
        <text>tRNA(Ile) + L-isoleucine + ATP = L-isoleucyl-tRNA(Ile) + AMP + diphosphate</text>
        <dbReference type="Rhea" id="RHEA:11060"/>
        <dbReference type="Rhea" id="RHEA-COMP:9666"/>
        <dbReference type="Rhea" id="RHEA-COMP:9695"/>
        <dbReference type="ChEBI" id="CHEBI:30616"/>
        <dbReference type="ChEBI" id="CHEBI:33019"/>
        <dbReference type="ChEBI" id="CHEBI:58045"/>
        <dbReference type="ChEBI" id="CHEBI:78442"/>
        <dbReference type="ChEBI" id="CHEBI:78528"/>
        <dbReference type="ChEBI" id="CHEBI:456215"/>
        <dbReference type="EC" id="6.1.1.5"/>
    </reaction>
</comment>
<comment type="cofactor">
    <cofactor evidence="1">
        <name>Zn(2+)</name>
        <dbReference type="ChEBI" id="CHEBI:29105"/>
    </cofactor>
    <text evidence="1">Binds 1 zinc ion per subunit.</text>
</comment>
<comment type="subunit">
    <text evidence="1">Monomer.</text>
</comment>
<comment type="subcellular location">
    <subcellularLocation>
        <location evidence="1">Cytoplasm</location>
    </subcellularLocation>
</comment>
<comment type="domain">
    <text evidence="1">IleRS has two distinct active sites: one for aminoacylation and one for editing. The misactivated valine is translocated from the active site to the editing site, which sterically excludes the correctly activated isoleucine. The single editing site contains two valyl binding pockets, one specific for each substrate (Val-AMP or Val-tRNA(Ile)).</text>
</comment>
<comment type="similarity">
    <text evidence="1">Belongs to the class-I aminoacyl-tRNA synthetase family. IleS type 1 subfamily.</text>
</comment>
<sequence length="943" mass="105633">MSQDYKTTLHLPATDFPMRGDLPKREPAILERWERDDFYAQLRAHAKGRPLFLLHDGPPYANGQIHLGHAVNKILKDIIIKSKHLDGFDAPYIPGWDCHGLPIEIAIEKKYGKVGVTLDAVQFRQKCREYAAEQIQLQRRDFKRLGIIGDWDAPYKTLDFRFEADEIRALAKIVDKGHLIRGTKPVHWCFDCGSALAEAEIEYTDKISPMVDVAYPALDPSALAAVFNATLPPDVQLAVPIWTTTPWTLPASLAICVGPTLDYVLVEGPTHSGQRRWLILAEALAAKALARYGIAELLIHGSAKGAAMEQHIFAHPFYPDRTIPLLLGNHVSAEDGTGAVHTAPGHGQEDHQVFQQYGLLNRYSAAELNPVDARGVYLSTTPPLGELTLAGLHIWKANPLIVDALRLRGVLLAAAEMHHSYPHCWRHKTPIVFRATPQWFISMEQAALRSAALKAITHVTWYPQWGQARILSMIENRPDWTISRQRTWGVPIPLFVHRHSGAPHPHSAALMRQIADRVQQQGVDIWYSLDQTELLGTEADQYEKITDILDVWFDSGITHEAVLLERGLPKPADLYLEGADQHRGWFQSSLLTGVAMDNAAPYKQCLTHGFTVDQHGRKMSKSLGNGIEPQDIIKTLGADILRLWIASTDYSNEMSLSQEILKRTTDAYRRIRNTARFLLGNLHGFDPTLHLVPLSDMIALDRWIVHRAFELQQTIKAAYTRYDFAEIVQTILNFCSVDLGSLYLDVTKDRLYTMREDAPGRRSAQTAMYHLTAAFVRWIAPILSFTADELWSYLPGDHADNVLFTTWYDGLAPLPPNAPLTAADFDKLLTLRDHVTKVLEPMRANGVIGAALEAEITVAAAADTAARWQPLTEELRFLFITGDVTVTPANTDGFFVSAQATTKAKCARCWHYRADIGAHPTHPELCGRCITNVDGPGEQRHWF</sequence>
<protein>
    <recommendedName>
        <fullName evidence="1">Isoleucine--tRNA ligase</fullName>
        <ecNumber evidence="1">6.1.1.5</ecNumber>
    </recommendedName>
    <alternativeName>
        <fullName evidence="1">Isoleucyl-tRNA synthetase</fullName>
        <shortName evidence="1">IleRS</shortName>
    </alternativeName>
</protein>
<evidence type="ECO:0000255" key="1">
    <source>
        <dbReference type="HAMAP-Rule" id="MF_02002"/>
    </source>
</evidence>
<proteinExistence type="inferred from homology"/>
<accession>Q87BL5</accession>
<organism>
    <name type="scientific">Xylella fastidiosa (strain Temecula1 / ATCC 700964)</name>
    <dbReference type="NCBI Taxonomy" id="183190"/>
    <lineage>
        <taxon>Bacteria</taxon>
        <taxon>Pseudomonadati</taxon>
        <taxon>Pseudomonadota</taxon>
        <taxon>Gammaproteobacteria</taxon>
        <taxon>Lysobacterales</taxon>
        <taxon>Lysobacteraceae</taxon>
        <taxon>Xylella</taxon>
    </lineage>
</organism>